<evidence type="ECO:0000255" key="1">
    <source>
        <dbReference type="HAMAP-Rule" id="MF_00045"/>
    </source>
</evidence>
<organism>
    <name type="scientific">Paracidovorax citrulli (strain AAC00-1)</name>
    <name type="common">Acidovorax citrulli</name>
    <dbReference type="NCBI Taxonomy" id="397945"/>
    <lineage>
        <taxon>Bacteria</taxon>
        <taxon>Pseudomonadati</taxon>
        <taxon>Pseudomonadota</taxon>
        <taxon>Betaproteobacteria</taxon>
        <taxon>Burkholderiales</taxon>
        <taxon>Comamonadaceae</taxon>
        <taxon>Paracidovorax</taxon>
    </lineage>
</organism>
<accession>A1TND9</accession>
<keyword id="KW-0963">Cytoplasm</keyword>
<keyword id="KW-0269">Exonuclease</keyword>
<keyword id="KW-0378">Hydrolase</keyword>
<keyword id="KW-0540">Nuclease</keyword>
<comment type="function">
    <text evidence="1">3'-to-5' exoribonuclease specific for small oligoribonucleotides.</text>
</comment>
<comment type="subcellular location">
    <subcellularLocation>
        <location evidence="1">Cytoplasm</location>
    </subcellularLocation>
</comment>
<comment type="similarity">
    <text evidence="1">Belongs to the oligoribonuclease family.</text>
</comment>
<feature type="chain" id="PRO_1000004223" description="Oligoribonuclease">
    <location>
        <begin position="1"/>
        <end position="193"/>
    </location>
</feature>
<feature type="domain" description="Exonuclease" evidence="1">
    <location>
        <begin position="20"/>
        <end position="183"/>
    </location>
</feature>
<feature type="active site" evidence="1">
    <location>
        <position position="141"/>
    </location>
</feature>
<sequence>MSDTAPVSVPPVLPKSDLNFVWLDCEMTGLDPEKDRLLEIAVVVTGPELEPRVEGPVFAIHQSDALLDGMDAWNKGTHGRSGLIEKVRASTVTEAEAEQAILEFLARYVRKGVAPMCGNSIGQDRRFLVRYMPKLEAFFHYRNVDVSTLKELSRRWKPEVYASFKKAQKHTALADVHESIEELAHYRKHLLVP</sequence>
<dbReference type="EC" id="3.1.15.-" evidence="1"/>
<dbReference type="EMBL" id="CP000512">
    <property type="protein sequence ID" value="ABM32477.1"/>
    <property type="molecule type" value="Genomic_DNA"/>
</dbReference>
<dbReference type="RefSeq" id="WP_011795022.1">
    <property type="nucleotide sequence ID" value="NC_008752.1"/>
</dbReference>
<dbReference type="SMR" id="A1TND9"/>
<dbReference type="STRING" id="397945.Aave_1893"/>
<dbReference type="GeneID" id="79791712"/>
<dbReference type="KEGG" id="aav:Aave_1893"/>
<dbReference type="eggNOG" id="COG1949">
    <property type="taxonomic scope" value="Bacteria"/>
</dbReference>
<dbReference type="HOGENOM" id="CLU_064761_2_0_4"/>
<dbReference type="OrthoDB" id="9801329at2"/>
<dbReference type="Proteomes" id="UP000002596">
    <property type="component" value="Chromosome"/>
</dbReference>
<dbReference type="GO" id="GO:0005737">
    <property type="term" value="C:cytoplasm"/>
    <property type="evidence" value="ECO:0007669"/>
    <property type="project" value="UniProtKB-SubCell"/>
</dbReference>
<dbReference type="GO" id="GO:0000175">
    <property type="term" value="F:3'-5'-RNA exonuclease activity"/>
    <property type="evidence" value="ECO:0007669"/>
    <property type="project" value="InterPro"/>
</dbReference>
<dbReference type="GO" id="GO:0003676">
    <property type="term" value="F:nucleic acid binding"/>
    <property type="evidence" value="ECO:0007669"/>
    <property type="project" value="InterPro"/>
</dbReference>
<dbReference type="GO" id="GO:0006259">
    <property type="term" value="P:DNA metabolic process"/>
    <property type="evidence" value="ECO:0007669"/>
    <property type="project" value="UniProtKB-ARBA"/>
</dbReference>
<dbReference type="CDD" id="cd06135">
    <property type="entry name" value="Orn"/>
    <property type="match status" value="1"/>
</dbReference>
<dbReference type="FunFam" id="3.30.420.10:FF:000003">
    <property type="entry name" value="Oligoribonuclease"/>
    <property type="match status" value="1"/>
</dbReference>
<dbReference type="Gene3D" id="3.30.420.10">
    <property type="entry name" value="Ribonuclease H-like superfamily/Ribonuclease H"/>
    <property type="match status" value="1"/>
</dbReference>
<dbReference type="HAMAP" id="MF_00045">
    <property type="entry name" value="Oligoribonuclease"/>
    <property type="match status" value="1"/>
</dbReference>
<dbReference type="InterPro" id="IPR013520">
    <property type="entry name" value="Exonuclease_RNaseT/DNA_pol3"/>
</dbReference>
<dbReference type="InterPro" id="IPR022894">
    <property type="entry name" value="Oligoribonuclease"/>
</dbReference>
<dbReference type="InterPro" id="IPR012337">
    <property type="entry name" value="RNaseH-like_sf"/>
</dbReference>
<dbReference type="InterPro" id="IPR036397">
    <property type="entry name" value="RNaseH_sf"/>
</dbReference>
<dbReference type="NCBIfam" id="NF003765">
    <property type="entry name" value="PRK05359.1"/>
    <property type="match status" value="1"/>
</dbReference>
<dbReference type="PANTHER" id="PTHR11046">
    <property type="entry name" value="OLIGORIBONUCLEASE, MITOCHONDRIAL"/>
    <property type="match status" value="1"/>
</dbReference>
<dbReference type="PANTHER" id="PTHR11046:SF0">
    <property type="entry name" value="OLIGORIBONUCLEASE, MITOCHONDRIAL"/>
    <property type="match status" value="1"/>
</dbReference>
<dbReference type="Pfam" id="PF00929">
    <property type="entry name" value="RNase_T"/>
    <property type="match status" value="1"/>
</dbReference>
<dbReference type="SMART" id="SM00479">
    <property type="entry name" value="EXOIII"/>
    <property type="match status" value="1"/>
</dbReference>
<dbReference type="SUPFAM" id="SSF53098">
    <property type="entry name" value="Ribonuclease H-like"/>
    <property type="match status" value="1"/>
</dbReference>
<proteinExistence type="inferred from homology"/>
<protein>
    <recommendedName>
        <fullName evidence="1">Oligoribonuclease</fullName>
        <ecNumber evidence="1">3.1.15.-</ecNumber>
    </recommendedName>
</protein>
<name>ORN_PARC0</name>
<reference key="1">
    <citation type="submission" date="2006-12" db="EMBL/GenBank/DDBJ databases">
        <title>Complete sequence of Acidovorax avenae subsp. citrulli AAC00-1.</title>
        <authorList>
            <person name="Copeland A."/>
            <person name="Lucas S."/>
            <person name="Lapidus A."/>
            <person name="Barry K."/>
            <person name="Detter J.C."/>
            <person name="Glavina del Rio T."/>
            <person name="Dalin E."/>
            <person name="Tice H."/>
            <person name="Pitluck S."/>
            <person name="Kiss H."/>
            <person name="Brettin T."/>
            <person name="Bruce D."/>
            <person name="Han C."/>
            <person name="Tapia R."/>
            <person name="Gilna P."/>
            <person name="Schmutz J."/>
            <person name="Larimer F."/>
            <person name="Land M."/>
            <person name="Hauser L."/>
            <person name="Kyrpides N."/>
            <person name="Kim E."/>
            <person name="Stahl D."/>
            <person name="Richardson P."/>
        </authorList>
    </citation>
    <scope>NUCLEOTIDE SEQUENCE [LARGE SCALE GENOMIC DNA]</scope>
    <source>
        <strain>AAC00-1</strain>
    </source>
</reference>
<gene>
    <name evidence="1" type="primary">orn</name>
    <name type="ordered locus">Aave_1893</name>
</gene>